<name>C3H48_ORYSJ</name>
<feature type="chain" id="PRO_0000346842" description="Putative zinc finger CCCH domain-containing protein 48">
    <location>
        <begin position="1"/>
        <end position="496"/>
    </location>
</feature>
<feature type="zinc finger region" description="C3H1-type 1" evidence="1">
    <location>
        <begin position="377"/>
        <end position="406"/>
    </location>
</feature>
<feature type="zinc finger region" description="C3H1-type 2" evidence="1">
    <location>
        <begin position="439"/>
        <end position="467"/>
    </location>
</feature>
<feature type="zinc finger region" description="C3H1-type 3" evidence="1">
    <location>
        <begin position="469"/>
        <end position="496"/>
    </location>
</feature>
<feature type="region of interest" description="Disordered" evidence="2">
    <location>
        <begin position="1"/>
        <end position="77"/>
    </location>
</feature>
<feature type="region of interest" description="Disordered" evidence="2">
    <location>
        <begin position="108"/>
        <end position="194"/>
    </location>
</feature>
<feature type="compositionally biased region" description="Acidic residues" evidence="2">
    <location>
        <begin position="143"/>
        <end position="156"/>
    </location>
</feature>
<gene>
    <name type="ordered locus">Os07g0139000</name>
    <name type="ordered locus">LOC_Os07g04650</name>
    <name type="ORF">OJ1417_E01.115</name>
    <name type="ORF">OsJ_022129</name>
    <name type="ORF">P0495H05.55</name>
</gene>
<reference key="1">
    <citation type="journal article" date="2005" name="Nature">
        <title>The map-based sequence of the rice genome.</title>
        <authorList>
            <consortium name="International rice genome sequencing project (IRGSP)"/>
        </authorList>
    </citation>
    <scope>NUCLEOTIDE SEQUENCE [LARGE SCALE GENOMIC DNA]</scope>
    <source>
        <strain>cv. Nipponbare</strain>
    </source>
</reference>
<reference key="2">
    <citation type="journal article" date="2013" name="Rice">
        <title>Improvement of the Oryza sativa Nipponbare reference genome using next generation sequence and optical map data.</title>
        <authorList>
            <person name="Kawahara Y."/>
            <person name="de la Bastide M."/>
            <person name="Hamilton J.P."/>
            <person name="Kanamori H."/>
            <person name="McCombie W.R."/>
            <person name="Ouyang S."/>
            <person name="Schwartz D.C."/>
            <person name="Tanaka T."/>
            <person name="Wu J."/>
            <person name="Zhou S."/>
            <person name="Childs K.L."/>
            <person name="Davidson R.M."/>
            <person name="Lin H."/>
            <person name="Quesada-Ocampo L."/>
            <person name="Vaillancourt B."/>
            <person name="Sakai H."/>
            <person name="Lee S.S."/>
            <person name="Kim J."/>
            <person name="Numa H."/>
            <person name="Itoh T."/>
            <person name="Buell C.R."/>
            <person name="Matsumoto T."/>
        </authorList>
    </citation>
    <scope>GENOME REANNOTATION</scope>
    <source>
        <strain>cv. Nipponbare</strain>
    </source>
</reference>
<reference key="3">
    <citation type="journal article" date="2005" name="PLoS Biol.">
        <title>The genomes of Oryza sativa: a history of duplications.</title>
        <authorList>
            <person name="Yu J."/>
            <person name="Wang J."/>
            <person name="Lin W."/>
            <person name="Li S."/>
            <person name="Li H."/>
            <person name="Zhou J."/>
            <person name="Ni P."/>
            <person name="Dong W."/>
            <person name="Hu S."/>
            <person name="Zeng C."/>
            <person name="Zhang J."/>
            <person name="Zhang Y."/>
            <person name="Li R."/>
            <person name="Xu Z."/>
            <person name="Li S."/>
            <person name="Li X."/>
            <person name="Zheng H."/>
            <person name="Cong L."/>
            <person name="Lin L."/>
            <person name="Yin J."/>
            <person name="Geng J."/>
            <person name="Li G."/>
            <person name="Shi J."/>
            <person name="Liu J."/>
            <person name="Lv H."/>
            <person name="Li J."/>
            <person name="Wang J."/>
            <person name="Deng Y."/>
            <person name="Ran L."/>
            <person name="Shi X."/>
            <person name="Wang X."/>
            <person name="Wu Q."/>
            <person name="Li C."/>
            <person name="Ren X."/>
            <person name="Wang J."/>
            <person name="Wang X."/>
            <person name="Li D."/>
            <person name="Liu D."/>
            <person name="Zhang X."/>
            <person name="Ji Z."/>
            <person name="Zhao W."/>
            <person name="Sun Y."/>
            <person name="Zhang Z."/>
            <person name="Bao J."/>
            <person name="Han Y."/>
            <person name="Dong L."/>
            <person name="Ji J."/>
            <person name="Chen P."/>
            <person name="Wu S."/>
            <person name="Liu J."/>
            <person name="Xiao Y."/>
            <person name="Bu D."/>
            <person name="Tan J."/>
            <person name="Yang L."/>
            <person name="Ye C."/>
            <person name="Zhang J."/>
            <person name="Xu J."/>
            <person name="Zhou Y."/>
            <person name="Yu Y."/>
            <person name="Zhang B."/>
            <person name="Zhuang S."/>
            <person name="Wei H."/>
            <person name="Liu B."/>
            <person name="Lei M."/>
            <person name="Yu H."/>
            <person name="Li Y."/>
            <person name="Xu H."/>
            <person name="Wei S."/>
            <person name="He X."/>
            <person name="Fang L."/>
            <person name="Zhang Z."/>
            <person name="Zhang Y."/>
            <person name="Huang X."/>
            <person name="Su Z."/>
            <person name="Tong W."/>
            <person name="Li J."/>
            <person name="Tong Z."/>
            <person name="Li S."/>
            <person name="Ye J."/>
            <person name="Wang L."/>
            <person name="Fang L."/>
            <person name="Lei T."/>
            <person name="Chen C.-S."/>
            <person name="Chen H.-C."/>
            <person name="Xu Z."/>
            <person name="Li H."/>
            <person name="Huang H."/>
            <person name="Zhang F."/>
            <person name="Xu H."/>
            <person name="Li N."/>
            <person name="Zhao C."/>
            <person name="Li S."/>
            <person name="Dong L."/>
            <person name="Huang Y."/>
            <person name="Li L."/>
            <person name="Xi Y."/>
            <person name="Qi Q."/>
            <person name="Li W."/>
            <person name="Zhang B."/>
            <person name="Hu W."/>
            <person name="Zhang Y."/>
            <person name="Tian X."/>
            <person name="Jiao Y."/>
            <person name="Liang X."/>
            <person name="Jin J."/>
            <person name="Gao L."/>
            <person name="Zheng W."/>
            <person name="Hao B."/>
            <person name="Liu S.-M."/>
            <person name="Wang W."/>
            <person name="Yuan L."/>
            <person name="Cao M."/>
            <person name="McDermott J."/>
            <person name="Samudrala R."/>
            <person name="Wang J."/>
            <person name="Wong G.K.-S."/>
            <person name="Yang H."/>
        </authorList>
    </citation>
    <scope>NUCLEOTIDE SEQUENCE [LARGE SCALE GENOMIC DNA]</scope>
    <source>
        <strain>cv. Nipponbare</strain>
    </source>
</reference>
<reference key="4">
    <citation type="journal article" date="2008" name="BMC Genomics">
        <title>Genome-wide analysis of CCCH zinc finger family in Arabidopsis and rice.</title>
        <authorList>
            <person name="Wang D."/>
            <person name="Guo Y."/>
            <person name="Wu C."/>
            <person name="Yang G."/>
            <person name="Li Y."/>
            <person name="Zheng C."/>
        </authorList>
    </citation>
    <scope>NOMENCLATURE</scope>
</reference>
<dbReference type="EMBL" id="AP003829">
    <property type="protein sequence ID" value="BAC45051.1"/>
    <property type="molecule type" value="Genomic_DNA"/>
</dbReference>
<dbReference type="EMBL" id="AP004314">
    <property type="protein sequence ID" value="BAC83497.1"/>
    <property type="molecule type" value="Genomic_DNA"/>
</dbReference>
<dbReference type="EMBL" id="AP014963">
    <property type="protein sequence ID" value="BAS99993.1"/>
    <property type="molecule type" value="Genomic_DNA"/>
</dbReference>
<dbReference type="EMBL" id="CM000144">
    <property type="protein sequence ID" value="EAZ38646.1"/>
    <property type="molecule type" value="Genomic_DNA"/>
</dbReference>
<dbReference type="STRING" id="39947.Q8GVZ8"/>
<dbReference type="PaxDb" id="39947-Q8GVZ8"/>
<dbReference type="EnsemblPlants" id="Os07t0139000-00">
    <property type="protein sequence ID" value="Os07t0139000-00"/>
    <property type="gene ID" value="Os07g0139000"/>
</dbReference>
<dbReference type="Gramene" id="Os07t0139000-00">
    <property type="protein sequence ID" value="Os07t0139000-00"/>
    <property type="gene ID" value="Os07g0139000"/>
</dbReference>
<dbReference type="HOGENOM" id="CLU_045321_0_0_1"/>
<dbReference type="InParanoid" id="Q8GVZ8"/>
<dbReference type="OMA" id="YRYRHYI"/>
<dbReference type="OrthoDB" id="410307at2759"/>
<dbReference type="Proteomes" id="UP000000763">
    <property type="component" value="Chromosome 7"/>
</dbReference>
<dbReference type="Proteomes" id="UP000007752">
    <property type="component" value="Chromosome 7"/>
</dbReference>
<dbReference type="Proteomes" id="UP000059680">
    <property type="component" value="Chromosome 7"/>
</dbReference>
<dbReference type="GO" id="GO:0003677">
    <property type="term" value="F:DNA binding"/>
    <property type="evidence" value="ECO:0007669"/>
    <property type="project" value="UniProtKB-KW"/>
</dbReference>
<dbReference type="GO" id="GO:0003729">
    <property type="term" value="F:mRNA binding"/>
    <property type="evidence" value="ECO:0007669"/>
    <property type="project" value="InterPro"/>
</dbReference>
<dbReference type="GO" id="GO:0008270">
    <property type="term" value="F:zinc ion binding"/>
    <property type="evidence" value="ECO:0007669"/>
    <property type="project" value="UniProtKB-KW"/>
</dbReference>
<dbReference type="FunFam" id="4.10.1000.10:FF:000053">
    <property type="entry name" value="Putative zinc finger CCCH domain-containing protein 48"/>
    <property type="match status" value="1"/>
</dbReference>
<dbReference type="Gene3D" id="4.10.1000.10">
    <property type="entry name" value="Zinc finger, CCCH-type"/>
    <property type="match status" value="2"/>
</dbReference>
<dbReference type="InterPro" id="IPR045877">
    <property type="entry name" value="ZFP36-like"/>
</dbReference>
<dbReference type="InterPro" id="IPR000571">
    <property type="entry name" value="Znf_CCCH"/>
</dbReference>
<dbReference type="InterPro" id="IPR036855">
    <property type="entry name" value="Znf_CCCH_sf"/>
</dbReference>
<dbReference type="PANTHER" id="PTHR12547">
    <property type="entry name" value="CCCH ZINC FINGER/TIS11-RELATED"/>
    <property type="match status" value="1"/>
</dbReference>
<dbReference type="PANTHER" id="PTHR12547:SF18">
    <property type="entry name" value="PROTEIN TIS11"/>
    <property type="match status" value="1"/>
</dbReference>
<dbReference type="Pfam" id="PF00642">
    <property type="entry name" value="zf-CCCH"/>
    <property type="match status" value="2"/>
</dbReference>
<dbReference type="SMART" id="SM00356">
    <property type="entry name" value="ZnF_C3H1"/>
    <property type="match status" value="3"/>
</dbReference>
<dbReference type="SUPFAM" id="SSF90229">
    <property type="entry name" value="CCCH zinc finger"/>
    <property type="match status" value="3"/>
</dbReference>
<dbReference type="PROSITE" id="PS50103">
    <property type="entry name" value="ZF_C3H1"/>
    <property type="match status" value="3"/>
</dbReference>
<protein>
    <recommendedName>
        <fullName>Putative zinc finger CCCH domain-containing protein 48</fullName>
        <shortName>OsC3H48</shortName>
    </recommendedName>
</protein>
<proteinExistence type="predicted"/>
<accession>Q8GVZ8</accession>
<accession>A0A0N7KMX0</accession>
<sequence length="496" mass="51702">MADSEDGDHVATTTTEQRYDDDGHLVPSSGGQEEEGSGGRDVVVPGGHVAEDYRSGVGVPVGRDAGGATSSPPQPVHVTPSILVGSIHAPVFQGELVGMKFGVGSGSMGAGTSATRRLPATGFGALPTSSMAEDSADHADDDHLAEEEEEEEEEHYIDDGPLVPSSGGQEEEGSGGRHVFVPGGHDGEEDHPDDLVADLDLDLLVDGVVGPVPGGHLNADAPAFVPTTRGRQDLYSALSSSAPAAGYRYRHYITSSALAEAGHVSPFLGLPYATAFDSPLDRELVGPSSAPPPCSAASRAWLVRCSSPLSDSEWTRRSILAREAAHTPASTVTGRGRFEFVPIPGAPYAPPPSFAPIAAGAGPAARPLQQLAFGLEEHKTKLCAEYYSRGLGCPRGNTCKYAHGEDDLRLVVAVSSLADAGEGSSSSDSSFAALGGEDKYKTKLCKTFTSGGLCLFAANCRFAHGEVELGKKEPCWYFFSGQTCPRGDTCGFRHSY</sequence>
<evidence type="ECO:0000255" key="1">
    <source>
        <dbReference type="PROSITE-ProRule" id="PRU00723"/>
    </source>
</evidence>
<evidence type="ECO:0000256" key="2">
    <source>
        <dbReference type="SAM" id="MobiDB-lite"/>
    </source>
</evidence>
<organism>
    <name type="scientific">Oryza sativa subsp. japonica</name>
    <name type="common">Rice</name>
    <dbReference type="NCBI Taxonomy" id="39947"/>
    <lineage>
        <taxon>Eukaryota</taxon>
        <taxon>Viridiplantae</taxon>
        <taxon>Streptophyta</taxon>
        <taxon>Embryophyta</taxon>
        <taxon>Tracheophyta</taxon>
        <taxon>Spermatophyta</taxon>
        <taxon>Magnoliopsida</taxon>
        <taxon>Liliopsida</taxon>
        <taxon>Poales</taxon>
        <taxon>Poaceae</taxon>
        <taxon>BOP clade</taxon>
        <taxon>Oryzoideae</taxon>
        <taxon>Oryzeae</taxon>
        <taxon>Oryzinae</taxon>
        <taxon>Oryza</taxon>
        <taxon>Oryza sativa</taxon>
    </lineage>
</organism>
<keyword id="KW-0238">DNA-binding</keyword>
<keyword id="KW-0479">Metal-binding</keyword>
<keyword id="KW-1185">Reference proteome</keyword>
<keyword id="KW-0677">Repeat</keyword>
<keyword id="KW-0862">Zinc</keyword>
<keyword id="KW-0863">Zinc-finger</keyword>